<sequence>MGKRDNRVAYLNPIAAARARGPAPTSGTTIQDYLSRPRPSWEEVKEQLEKKRKGSRALADFEDKMNARWKKELEKNREKVLGGGDKKEKEKEKDKEKEKKEKKKKEKKKSSRHSSSSSSSSSSSDSSSSSSSDAEDDDEKKNLKKKKKRKRSSTRKASDETDSESETDSRESFKKKRKKTDGEKDKDEKDSRKKRKAERSQSESSDESDVDKDADSKKKKHSSEEKEKITDKSKKKKKKKKHKKHSKKKKRKTSSSELD</sequence>
<proteinExistence type="evidence at transcript level"/>
<gene>
    <name type="primary">fam133</name>
    <name type="ORF">si:ch211-287b5.3</name>
    <name type="ORF">zgc:153800</name>
</gene>
<organism>
    <name type="scientific">Danio rerio</name>
    <name type="common">Zebrafish</name>
    <name type="synonym">Brachydanio rerio</name>
    <dbReference type="NCBI Taxonomy" id="7955"/>
    <lineage>
        <taxon>Eukaryota</taxon>
        <taxon>Metazoa</taxon>
        <taxon>Chordata</taxon>
        <taxon>Craniata</taxon>
        <taxon>Vertebrata</taxon>
        <taxon>Euteleostomi</taxon>
        <taxon>Actinopterygii</taxon>
        <taxon>Neopterygii</taxon>
        <taxon>Teleostei</taxon>
        <taxon>Ostariophysi</taxon>
        <taxon>Cypriniformes</taxon>
        <taxon>Danionidae</taxon>
        <taxon>Danioninae</taxon>
        <taxon>Danio</taxon>
    </lineage>
</organism>
<protein>
    <recommendedName>
        <fullName>Protein FAM133</fullName>
    </recommendedName>
</protein>
<name>F133_DANRE</name>
<accession>A1A5I1</accession>
<accession>Q1RM45</accession>
<accession>Q503Y9</accession>
<accession>Q6DH73</accession>
<evidence type="ECO:0000256" key="1">
    <source>
        <dbReference type="SAM" id="MobiDB-lite"/>
    </source>
</evidence>
<evidence type="ECO:0000305" key="2"/>
<dbReference type="EMBL" id="BX936336">
    <property type="status" value="NOT_ANNOTATED_CDS"/>
    <property type="molecule type" value="Genomic_DNA"/>
</dbReference>
<dbReference type="EMBL" id="CT027751">
    <property type="status" value="NOT_ANNOTATED_CDS"/>
    <property type="molecule type" value="Genomic_DNA"/>
</dbReference>
<dbReference type="EMBL" id="BC076108">
    <property type="protein sequence ID" value="AAH76108.1"/>
    <property type="molecule type" value="mRNA"/>
</dbReference>
<dbReference type="EMBL" id="BC095122">
    <property type="protein sequence ID" value="AAH95122.1"/>
    <property type="molecule type" value="mRNA"/>
</dbReference>
<dbReference type="EMBL" id="BC115144">
    <property type="protein sequence ID" value="AAI15145.1"/>
    <property type="molecule type" value="mRNA"/>
</dbReference>
<dbReference type="EMBL" id="BC128660">
    <property type="protein sequence ID" value="AAI28661.1"/>
    <property type="molecule type" value="mRNA"/>
</dbReference>
<dbReference type="RefSeq" id="NP_001073556.1">
    <property type="nucleotide sequence ID" value="NM_001080087.1"/>
</dbReference>
<dbReference type="SMR" id="A1A5I1"/>
<dbReference type="STRING" id="7955.ENSDARP00000083980"/>
<dbReference type="PaxDb" id="7955-ENSDARP00000083980"/>
<dbReference type="Ensembl" id="ENSDART00000089547">
    <property type="protein sequence ID" value="ENSDARP00000083980"/>
    <property type="gene ID" value="ENSDARG00000013863"/>
</dbReference>
<dbReference type="GeneID" id="790942"/>
<dbReference type="KEGG" id="dre:790942"/>
<dbReference type="AGR" id="ZFIN:ZDB-GENE-060503-229"/>
<dbReference type="CTD" id="257415"/>
<dbReference type="ZFIN" id="ZDB-GENE-060503-229">
    <property type="gene designation" value="fam133b"/>
</dbReference>
<dbReference type="eggNOG" id="ENOG502RXMT">
    <property type="taxonomic scope" value="Eukaryota"/>
</dbReference>
<dbReference type="HOGENOM" id="CLU_108741_0_0_1"/>
<dbReference type="InParanoid" id="A1A5I1"/>
<dbReference type="OMA" id="KTGHRRH"/>
<dbReference type="OrthoDB" id="10065679at2759"/>
<dbReference type="TreeFam" id="TF350193"/>
<dbReference type="PRO" id="PR:A1A5I1"/>
<dbReference type="Proteomes" id="UP000000437">
    <property type="component" value="Alternate scaffold 19"/>
</dbReference>
<dbReference type="Proteomes" id="UP000000437">
    <property type="component" value="Chromosome 19"/>
</dbReference>
<dbReference type="Bgee" id="ENSDARG00000013863">
    <property type="expression patterns" value="Expressed in somite and 27 other cell types or tissues"/>
</dbReference>
<dbReference type="ExpressionAtlas" id="A1A5I1">
    <property type="expression patterns" value="baseline and differential"/>
</dbReference>
<dbReference type="InterPro" id="IPR026766">
    <property type="entry name" value="Fam133"/>
</dbReference>
<dbReference type="PANTHER" id="PTHR31911:SF1">
    <property type="entry name" value="FAMILY WITH SEQUENCE SIMILARITY 133 MEMBER B-RELATED"/>
    <property type="match status" value="1"/>
</dbReference>
<dbReference type="PANTHER" id="PTHR31911">
    <property type="entry name" value="PROTEIN FAM133"/>
    <property type="match status" value="1"/>
</dbReference>
<keyword id="KW-1185">Reference proteome</keyword>
<comment type="similarity">
    <text evidence="2">Belongs to the FAM133 family.</text>
</comment>
<feature type="chain" id="PRO_0000287621" description="Protein FAM133">
    <location>
        <begin position="1"/>
        <end position="259"/>
    </location>
</feature>
<feature type="region of interest" description="Disordered" evidence="1">
    <location>
        <begin position="18"/>
        <end position="259"/>
    </location>
</feature>
<feature type="compositionally biased region" description="Basic and acidic residues" evidence="1">
    <location>
        <begin position="39"/>
        <end position="49"/>
    </location>
</feature>
<feature type="compositionally biased region" description="Basic and acidic residues" evidence="1">
    <location>
        <begin position="59"/>
        <end position="99"/>
    </location>
</feature>
<feature type="compositionally biased region" description="Basic residues" evidence="1">
    <location>
        <begin position="100"/>
        <end position="112"/>
    </location>
</feature>
<feature type="compositionally biased region" description="Low complexity" evidence="1">
    <location>
        <begin position="113"/>
        <end position="132"/>
    </location>
</feature>
<feature type="compositionally biased region" description="Basic residues" evidence="1">
    <location>
        <begin position="142"/>
        <end position="154"/>
    </location>
</feature>
<feature type="compositionally biased region" description="Basic and acidic residues" evidence="1">
    <location>
        <begin position="180"/>
        <end position="191"/>
    </location>
</feature>
<feature type="compositionally biased region" description="Basic and acidic residues" evidence="1">
    <location>
        <begin position="211"/>
        <end position="232"/>
    </location>
</feature>
<feature type="compositionally biased region" description="Basic residues" evidence="1">
    <location>
        <begin position="233"/>
        <end position="253"/>
    </location>
</feature>
<feature type="sequence conflict" description="In Ref. 2; AAI15145." evidence="2" ref="2">
    <original>E</original>
    <variation>K</variation>
    <location>
        <position position="106"/>
    </location>
</feature>
<feature type="sequence conflict" description="In Ref. 2; AAH95122/AAI28661." evidence="2" ref="2">
    <original>S</original>
    <variation>L</variation>
    <location>
        <position position="132"/>
    </location>
</feature>
<reference key="1">
    <citation type="journal article" date="2013" name="Nature">
        <title>The zebrafish reference genome sequence and its relationship to the human genome.</title>
        <authorList>
            <person name="Howe K."/>
            <person name="Clark M.D."/>
            <person name="Torroja C.F."/>
            <person name="Torrance J."/>
            <person name="Berthelot C."/>
            <person name="Muffato M."/>
            <person name="Collins J.E."/>
            <person name="Humphray S."/>
            <person name="McLaren K."/>
            <person name="Matthews L."/>
            <person name="McLaren S."/>
            <person name="Sealy I."/>
            <person name="Caccamo M."/>
            <person name="Churcher C."/>
            <person name="Scott C."/>
            <person name="Barrett J.C."/>
            <person name="Koch R."/>
            <person name="Rauch G.J."/>
            <person name="White S."/>
            <person name="Chow W."/>
            <person name="Kilian B."/>
            <person name="Quintais L.T."/>
            <person name="Guerra-Assuncao J.A."/>
            <person name="Zhou Y."/>
            <person name="Gu Y."/>
            <person name="Yen J."/>
            <person name="Vogel J.H."/>
            <person name="Eyre T."/>
            <person name="Redmond S."/>
            <person name="Banerjee R."/>
            <person name="Chi J."/>
            <person name="Fu B."/>
            <person name="Langley E."/>
            <person name="Maguire S.F."/>
            <person name="Laird G.K."/>
            <person name="Lloyd D."/>
            <person name="Kenyon E."/>
            <person name="Donaldson S."/>
            <person name="Sehra H."/>
            <person name="Almeida-King J."/>
            <person name="Loveland J."/>
            <person name="Trevanion S."/>
            <person name="Jones M."/>
            <person name="Quail M."/>
            <person name="Willey D."/>
            <person name="Hunt A."/>
            <person name="Burton J."/>
            <person name="Sims S."/>
            <person name="McLay K."/>
            <person name="Plumb B."/>
            <person name="Davis J."/>
            <person name="Clee C."/>
            <person name="Oliver K."/>
            <person name="Clark R."/>
            <person name="Riddle C."/>
            <person name="Elliot D."/>
            <person name="Threadgold G."/>
            <person name="Harden G."/>
            <person name="Ware D."/>
            <person name="Begum S."/>
            <person name="Mortimore B."/>
            <person name="Kerry G."/>
            <person name="Heath P."/>
            <person name="Phillimore B."/>
            <person name="Tracey A."/>
            <person name="Corby N."/>
            <person name="Dunn M."/>
            <person name="Johnson C."/>
            <person name="Wood J."/>
            <person name="Clark S."/>
            <person name="Pelan S."/>
            <person name="Griffiths G."/>
            <person name="Smith M."/>
            <person name="Glithero R."/>
            <person name="Howden P."/>
            <person name="Barker N."/>
            <person name="Lloyd C."/>
            <person name="Stevens C."/>
            <person name="Harley J."/>
            <person name="Holt K."/>
            <person name="Panagiotidis G."/>
            <person name="Lovell J."/>
            <person name="Beasley H."/>
            <person name="Henderson C."/>
            <person name="Gordon D."/>
            <person name="Auger K."/>
            <person name="Wright D."/>
            <person name="Collins J."/>
            <person name="Raisen C."/>
            <person name="Dyer L."/>
            <person name="Leung K."/>
            <person name="Robertson L."/>
            <person name="Ambridge K."/>
            <person name="Leongamornlert D."/>
            <person name="McGuire S."/>
            <person name="Gilderthorp R."/>
            <person name="Griffiths C."/>
            <person name="Manthravadi D."/>
            <person name="Nichol S."/>
            <person name="Barker G."/>
            <person name="Whitehead S."/>
            <person name="Kay M."/>
            <person name="Brown J."/>
            <person name="Murnane C."/>
            <person name="Gray E."/>
            <person name="Humphries M."/>
            <person name="Sycamore N."/>
            <person name="Barker D."/>
            <person name="Saunders D."/>
            <person name="Wallis J."/>
            <person name="Babbage A."/>
            <person name="Hammond S."/>
            <person name="Mashreghi-Mohammadi M."/>
            <person name="Barr L."/>
            <person name="Martin S."/>
            <person name="Wray P."/>
            <person name="Ellington A."/>
            <person name="Matthews N."/>
            <person name="Ellwood M."/>
            <person name="Woodmansey R."/>
            <person name="Clark G."/>
            <person name="Cooper J."/>
            <person name="Tromans A."/>
            <person name="Grafham D."/>
            <person name="Skuce C."/>
            <person name="Pandian R."/>
            <person name="Andrews R."/>
            <person name="Harrison E."/>
            <person name="Kimberley A."/>
            <person name="Garnett J."/>
            <person name="Fosker N."/>
            <person name="Hall R."/>
            <person name="Garner P."/>
            <person name="Kelly D."/>
            <person name="Bird C."/>
            <person name="Palmer S."/>
            <person name="Gehring I."/>
            <person name="Berger A."/>
            <person name="Dooley C.M."/>
            <person name="Ersan-Urun Z."/>
            <person name="Eser C."/>
            <person name="Geiger H."/>
            <person name="Geisler M."/>
            <person name="Karotki L."/>
            <person name="Kirn A."/>
            <person name="Konantz J."/>
            <person name="Konantz M."/>
            <person name="Oberlander M."/>
            <person name="Rudolph-Geiger S."/>
            <person name="Teucke M."/>
            <person name="Lanz C."/>
            <person name="Raddatz G."/>
            <person name="Osoegawa K."/>
            <person name="Zhu B."/>
            <person name="Rapp A."/>
            <person name="Widaa S."/>
            <person name="Langford C."/>
            <person name="Yang F."/>
            <person name="Schuster S.C."/>
            <person name="Carter N.P."/>
            <person name="Harrow J."/>
            <person name="Ning Z."/>
            <person name="Herrero J."/>
            <person name="Searle S.M."/>
            <person name="Enright A."/>
            <person name="Geisler R."/>
            <person name="Plasterk R.H."/>
            <person name="Lee C."/>
            <person name="Westerfield M."/>
            <person name="de Jong P.J."/>
            <person name="Zon L.I."/>
            <person name="Postlethwait J.H."/>
            <person name="Nusslein-Volhard C."/>
            <person name="Hubbard T.J."/>
            <person name="Roest Crollius H."/>
            <person name="Rogers J."/>
            <person name="Stemple D.L."/>
        </authorList>
    </citation>
    <scope>NUCLEOTIDE SEQUENCE [LARGE SCALE GENOMIC DNA]</scope>
    <source>
        <strain>Tuebingen</strain>
    </source>
</reference>
<reference key="2">
    <citation type="submission" date="2006-12" db="EMBL/GenBank/DDBJ databases">
        <authorList>
            <consortium name="NIH - Zebrafish Gene Collection (ZGC) project"/>
        </authorList>
    </citation>
    <scope>NUCLEOTIDE SEQUENCE [LARGE SCALE MRNA]</scope>
    <source>
        <strain>WIK</strain>
        <tissue>Brain</tissue>
        <tissue>Larval eye</tissue>
    </source>
</reference>